<protein>
    <recommendedName>
        <fullName evidence="1">3-isopropylmalate dehydratase large subunit</fullName>
        <ecNumber evidence="1">4.2.1.33</ecNumber>
    </recommendedName>
    <alternativeName>
        <fullName evidence="1">Alpha-IPM isomerase</fullName>
        <shortName evidence="1">IPMI</shortName>
    </alternativeName>
    <alternativeName>
        <fullName evidence="1">Isopropylmalate isomerase</fullName>
    </alternativeName>
</protein>
<dbReference type="EC" id="4.2.1.33" evidence="1"/>
<dbReference type="EMBL" id="CP000305">
    <property type="protein sequence ID" value="ABG16733.1"/>
    <property type="molecule type" value="Genomic_DNA"/>
</dbReference>
<dbReference type="EMBL" id="ACNQ01000006">
    <property type="protein sequence ID" value="EEO78188.1"/>
    <property type="molecule type" value="Genomic_DNA"/>
</dbReference>
<dbReference type="RefSeq" id="WP_002210455.1">
    <property type="nucleotide sequence ID" value="NZ_ACNQ01000006.1"/>
</dbReference>
<dbReference type="SMR" id="Q1CMP7"/>
<dbReference type="GeneID" id="57974081"/>
<dbReference type="KEGG" id="ypn:YPN_0401"/>
<dbReference type="HOGENOM" id="CLU_006714_3_4_6"/>
<dbReference type="UniPathway" id="UPA00048">
    <property type="reaction ID" value="UER00071"/>
</dbReference>
<dbReference type="Proteomes" id="UP000008936">
    <property type="component" value="Chromosome"/>
</dbReference>
<dbReference type="GO" id="GO:0003861">
    <property type="term" value="F:3-isopropylmalate dehydratase activity"/>
    <property type="evidence" value="ECO:0007669"/>
    <property type="project" value="UniProtKB-UniRule"/>
</dbReference>
<dbReference type="GO" id="GO:0051539">
    <property type="term" value="F:4 iron, 4 sulfur cluster binding"/>
    <property type="evidence" value="ECO:0007669"/>
    <property type="project" value="UniProtKB-KW"/>
</dbReference>
<dbReference type="GO" id="GO:0046872">
    <property type="term" value="F:metal ion binding"/>
    <property type="evidence" value="ECO:0007669"/>
    <property type="project" value="UniProtKB-KW"/>
</dbReference>
<dbReference type="GO" id="GO:0009098">
    <property type="term" value="P:L-leucine biosynthetic process"/>
    <property type="evidence" value="ECO:0007669"/>
    <property type="project" value="UniProtKB-UniRule"/>
</dbReference>
<dbReference type="CDD" id="cd01583">
    <property type="entry name" value="IPMI"/>
    <property type="match status" value="1"/>
</dbReference>
<dbReference type="FunFam" id="3.30.499.10:FF:000006">
    <property type="entry name" value="3-isopropylmalate dehydratase large subunit"/>
    <property type="match status" value="1"/>
</dbReference>
<dbReference type="FunFam" id="3.30.499.10:FF:000007">
    <property type="entry name" value="3-isopropylmalate dehydratase large subunit"/>
    <property type="match status" value="1"/>
</dbReference>
<dbReference type="Gene3D" id="3.30.499.10">
    <property type="entry name" value="Aconitase, domain 3"/>
    <property type="match status" value="2"/>
</dbReference>
<dbReference type="HAMAP" id="MF_01026">
    <property type="entry name" value="LeuC_type1"/>
    <property type="match status" value="1"/>
</dbReference>
<dbReference type="InterPro" id="IPR004430">
    <property type="entry name" value="3-IsopropMal_deHydase_lsu"/>
</dbReference>
<dbReference type="InterPro" id="IPR015931">
    <property type="entry name" value="Acnase/IPM_dHydase_lsu_aba_1/3"/>
</dbReference>
<dbReference type="InterPro" id="IPR001030">
    <property type="entry name" value="Acoase/IPM_deHydtase_lsu_aba"/>
</dbReference>
<dbReference type="InterPro" id="IPR018136">
    <property type="entry name" value="Aconitase_4Fe-4S_BS"/>
</dbReference>
<dbReference type="InterPro" id="IPR036008">
    <property type="entry name" value="Aconitase_4Fe-4S_dom"/>
</dbReference>
<dbReference type="InterPro" id="IPR050067">
    <property type="entry name" value="IPM_dehydratase_rel_enz"/>
</dbReference>
<dbReference type="InterPro" id="IPR033941">
    <property type="entry name" value="IPMI_cat"/>
</dbReference>
<dbReference type="NCBIfam" id="TIGR00170">
    <property type="entry name" value="leuC"/>
    <property type="match status" value="1"/>
</dbReference>
<dbReference type="NCBIfam" id="NF004016">
    <property type="entry name" value="PRK05478.1"/>
    <property type="match status" value="1"/>
</dbReference>
<dbReference type="NCBIfam" id="NF009116">
    <property type="entry name" value="PRK12466.1"/>
    <property type="match status" value="1"/>
</dbReference>
<dbReference type="PANTHER" id="PTHR43822:SF9">
    <property type="entry name" value="3-ISOPROPYLMALATE DEHYDRATASE"/>
    <property type="match status" value="1"/>
</dbReference>
<dbReference type="PANTHER" id="PTHR43822">
    <property type="entry name" value="HOMOACONITASE, MITOCHONDRIAL-RELATED"/>
    <property type="match status" value="1"/>
</dbReference>
<dbReference type="Pfam" id="PF00330">
    <property type="entry name" value="Aconitase"/>
    <property type="match status" value="1"/>
</dbReference>
<dbReference type="PRINTS" id="PR00415">
    <property type="entry name" value="ACONITASE"/>
</dbReference>
<dbReference type="SUPFAM" id="SSF53732">
    <property type="entry name" value="Aconitase iron-sulfur domain"/>
    <property type="match status" value="1"/>
</dbReference>
<dbReference type="PROSITE" id="PS00450">
    <property type="entry name" value="ACONITASE_1"/>
    <property type="match status" value="1"/>
</dbReference>
<dbReference type="PROSITE" id="PS01244">
    <property type="entry name" value="ACONITASE_2"/>
    <property type="match status" value="1"/>
</dbReference>
<organism>
    <name type="scientific">Yersinia pestis bv. Antiqua (strain Nepal516)</name>
    <dbReference type="NCBI Taxonomy" id="377628"/>
    <lineage>
        <taxon>Bacteria</taxon>
        <taxon>Pseudomonadati</taxon>
        <taxon>Pseudomonadota</taxon>
        <taxon>Gammaproteobacteria</taxon>
        <taxon>Enterobacterales</taxon>
        <taxon>Yersiniaceae</taxon>
        <taxon>Yersinia</taxon>
    </lineage>
</organism>
<reference key="1">
    <citation type="journal article" date="2006" name="J. Bacteriol.">
        <title>Complete genome sequence of Yersinia pestis strains Antiqua and Nepal516: evidence of gene reduction in an emerging pathogen.</title>
        <authorList>
            <person name="Chain P.S.G."/>
            <person name="Hu P."/>
            <person name="Malfatti S.A."/>
            <person name="Radnedge L."/>
            <person name="Larimer F."/>
            <person name="Vergez L.M."/>
            <person name="Worsham P."/>
            <person name="Chu M.C."/>
            <person name="Andersen G.L."/>
        </authorList>
    </citation>
    <scope>NUCLEOTIDE SEQUENCE [LARGE SCALE GENOMIC DNA]</scope>
    <source>
        <strain>Nepal516</strain>
    </source>
</reference>
<reference key="2">
    <citation type="submission" date="2009-04" db="EMBL/GenBank/DDBJ databases">
        <title>Yersinia pestis Nepal516A whole genome shotgun sequencing project.</title>
        <authorList>
            <person name="Plunkett G. III"/>
            <person name="Anderson B.D."/>
            <person name="Baumler D.J."/>
            <person name="Burland V."/>
            <person name="Cabot E.L."/>
            <person name="Glasner J.D."/>
            <person name="Mau B."/>
            <person name="Neeno-Eckwall E."/>
            <person name="Perna N.T."/>
            <person name="Munk A.C."/>
            <person name="Tapia R."/>
            <person name="Green L.D."/>
            <person name="Rogers Y.C."/>
            <person name="Detter J.C."/>
            <person name="Bruce D.C."/>
            <person name="Brettin T.S."/>
        </authorList>
    </citation>
    <scope>NUCLEOTIDE SEQUENCE [LARGE SCALE GENOMIC DNA]</scope>
    <source>
        <strain>Nepal516</strain>
    </source>
</reference>
<evidence type="ECO:0000255" key="1">
    <source>
        <dbReference type="HAMAP-Rule" id="MF_01026"/>
    </source>
</evidence>
<gene>
    <name evidence="1" type="primary">leuC</name>
    <name type="ordered locus">YPN_0401</name>
    <name type="ORF">YP516_0412</name>
</gene>
<keyword id="KW-0004">4Fe-4S</keyword>
<keyword id="KW-0028">Amino-acid biosynthesis</keyword>
<keyword id="KW-0100">Branched-chain amino acid biosynthesis</keyword>
<keyword id="KW-0408">Iron</keyword>
<keyword id="KW-0411">Iron-sulfur</keyword>
<keyword id="KW-0432">Leucine biosynthesis</keyword>
<keyword id="KW-0456">Lyase</keyword>
<keyword id="KW-0479">Metal-binding</keyword>
<name>LEUC_YERPN</name>
<proteinExistence type="inferred from homology"/>
<feature type="chain" id="PRO_1000063636" description="3-isopropylmalate dehydratase large subunit">
    <location>
        <begin position="1"/>
        <end position="476"/>
    </location>
</feature>
<feature type="binding site" evidence="1">
    <location>
        <position position="353"/>
    </location>
    <ligand>
        <name>[4Fe-4S] cluster</name>
        <dbReference type="ChEBI" id="CHEBI:49883"/>
    </ligand>
</feature>
<feature type="binding site" evidence="1">
    <location>
        <position position="413"/>
    </location>
    <ligand>
        <name>[4Fe-4S] cluster</name>
        <dbReference type="ChEBI" id="CHEBI:49883"/>
    </ligand>
</feature>
<feature type="binding site" evidence="1">
    <location>
        <position position="416"/>
    </location>
    <ligand>
        <name>[4Fe-4S] cluster</name>
        <dbReference type="ChEBI" id="CHEBI:49883"/>
    </ligand>
</feature>
<comment type="function">
    <text evidence="1">Catalyzes the isomerization between 2-isopropylmalate and 3-isopropylmalate, via the formation of 2-isopropylmaleate.</text>
</comment>
<comment type="catalytic activity">
    <reaction evidence="1">
        <text>(2R,3S)-3-isopropylmalate = (2S)-2-isopropylmalate</text>
        <dbReference type="Rhea" id="RHEA:32287"/>
        <dbReference type="ChEBI" id="CHEBI:1178"/>
        <dbReference type="ChEBI" id="CHEBI:35121"/>
        <dbReference type="EC" id="4.2.1.33"/>
    </reaction>
</comment>
<comment type="cofactor">
    <cofactor evidence="1">
        <name>[4Fe-4S] cluster</name>
        <dbReference type="ChEBI" id="CHEBI:49883"/>
    </cofactor>
    <text evidence="1">Binds 1 [4Fe-4S] cluster per subunit.</text>
</comment>
<comment type="pathway">
    <text evidence="1">Amino-acid biosynthesis; L-leucine biosynthesis; L-leucine from 3-methyl-2-oxobutanoate: step 2/4.</text>
</comment>
<comment type="subunit">
    <text evidence="1">Heterodimer of LeuC and LeuD.</text>
</comment>
<comment type="similarity">
    <text evidence="1">Belongs to the aconitase/IPM isomerase family. LeuC type 1 subfamily.</text>
</comment>
<sequence length="476" mass="50589">MGTTSSQSKTLYQKLYDAHIVHEAPNETPLLYIDRHLVHEVTSPQAFDGLRAMGRPVRQPGKTFATMDHNVSTQTKDINASGEMARIQMQELIKNCAEFGVSLYDLNHPFQGIVHVIGPEQGMTLPGMTIVCGDSHTATHGAFGSLAFGIGTSEVEHVLATQTLKQGRAKTMRIEVNGTVGAGITAKDIVLAIIGKTGSAGGTGHVVEFCGSAIEALSMEGRMTLCNMAIEMGAKAGLVAPDDTTFAYLKGRQFAPTGEQWEQGVAYWRTLKSDADAQFDTIVTLDAADIAPQVTWGTNPGQVIAVNQIIPAPESFSDPVERASAEKALAYMDLRPGIKLTEVAIDKVFIGSCTNSRIEDLRAAAAIAQGRKVAKGVQAIVVPGSGPVKAQAEAEGLDKIFIAAGFEWRLPGCSMCLAMNNDRLEPGERCASTSNRNFEGRQGRGGRTHLVSPAMAAAAAVSGHFADVRELSATTH</sequence>
<accession>Q1CMP7</accession>
<accession>C4GNV6</accession>